<comment type="function">
    <text>Transcriptional activator that specifically binds DNA sequence 5'-AGAAnnTTCT-3' known as heat shock promoter elements (HSE).</text>
</comment>
<comment type="subunit">
    <text evidence="1">Homotrimer.</text>
</comment>
<comment type="subcellular location">
    <subcellularLocation>
        <location evidence="4">Nucleus</location>
    </subcellularLocation>
</comment>
<comment type="domain">
    <text evidence="3">The hydrophobic-rich region (HR-A/B) corresponds to the oligomerization domain. AHA motif is a transcriptional activator element.</text>
</comment>
<comment type="PTM">
    <text evidence="1">Exhibits temperature-dependent phosphorylation.</text>
</comment>
<comment type="similarity">
    <text evidence="4">Belongs to the HSF family. Class A subfamily.</text>
</comment>
<comment type="sequence caution" evidence="4">
    <conflict type="erroneous termination">
        <sequence resource="EMBL-CDS" id="ABK28741"/>
    </conflict>
    <text>Extended C-terminus.</text>
</comment>
<comment type="sequence caution" evidence="4">
    <conflict type="erroneous gene model prediction">
        <sequence resource="EMBL-CDS" id="BAB11313"/>
    </conflict>
</comment>
<reference key="1">
    <citation type="submission" date="1999-04" db="EMBL/GenBank/DDBJ databases">
        <title>Structural analysis of Arabidopsis thaliana chromosome 5. XI.</title>
        <authorList>
            <person name="Kaneko T."/>
            <person name="Katoh T."/>
            <person name="Asamizu E."/>
            <person name="Sato S."/>
            <person name="Nakamura Y."/>
            <person name="Kotani H."/>
            <person name="Tabata S."/>
        </authorList>
    </citation>
    <scope>NUCLEOTIDE SEQUENCE [LARGE SCALE GENOMIC DNA]</scope>
    <source>
        <strain>cv. Columbia</strain>
    </source>
</reference>
<reference key="2">
    <citation type="journal article" date="2017" name="Plant J.">
        <title>Araport11: a complete reannotation of the Arabidopsis thaliana reference genome.</title>
        <authorList>
            <person name="Cheng C.Y."/>
            <person name="Krishnakumar V."/>
            <person name="Chan A.P."/>
            <person name="Thibaud-Nissen F."/>
            <person name="Schobel S."/>
            <person name="Town C.D."/>
        </authorList>
    </citation>
    <scope>GENOME REANNOTATION</scope>
    <source>
        <strain>cv. Columbia</strain>
    </source>
</reference>
<reference key="3">
    <citation type="journal article" date="2006" name="Plant Biotechnol. J.">
        <title>Simultaneous high-throughput recombinational cloning of open reading frames in closed and open configurations.</title>
        <authorList>
            <person name="Underwood B.A."/>
            <person name="Vanderhaeghen R."/>
            <person name="Whitford R."/>
            <person name="Town C.D."/>
            <person name="Hilson P."/>
        </authorList>
    </citation>
    <scope>NUCLEOTIDE SEQUENCE [LARGE SCALE MRNA]</scope>
    <source>
        <strain>cv. Columbia</strain>
    </source>
</reference>
<reference key="4">
    <citation type="journal article" date="2001" name="Cell Stress Chaperones">
        <title>Arabidopsis and the heat stress transcription factor world: how many heat stress transcription factors do we need?</title>
        <authorList>
            <person name="Nover L."/>
            <person name="Bharti K."/>
            <person name="Doering P."/>
            <person name="Mishra S.K."/>
            <person name="Ganguli A."/>
            <person name="Scharf K.-D."/>
        </authorList>
    </citation>
    <scope>GENE FAMILY</scope>
    <scope>NOMENCLATURE</scope>
    <scope>DOMAIN AHA</scope>
</reference>
<reference key="5">
    <citation type="journal article" date="2008" name="J. Genet. Genomics">
        <title>Genome-wide analysis of heat shock transcription factor families in rice and Arabidopsis.</title>
        <authorList>
            <person name="Guo J."/>
            <person name="Wu J."/>
            <person name="Ji Q."/>
            <person name="Wang C."/>
            <person name="Luo L."/>
            <person name="Yuan Y."/>
            <person name="Wang Y."/>
            <person name="Wang J."/>
        </authorList>
    </citation>
    <scope>GENE FAMILY</scope>
    <scope>NOMENCLATURE</scope>
</reference>
<sequence>MDYNLPIPLEGLKETPPTAFLTKTYNIVEDSSTNNIVSWSRDNNSFIVWEPETFALICLPRCFKHNNFSSFVRQLNTYGFKKIDTERWEFANEHFLKGERHLLKNIKRRKTSSQTQTQSLEGEIHELRRDRMALEVELVRLRRKQESVKTYLHLMEEKLKVTEVKQEMMMNFLLKKIKKPSFLQSLRKRNLQGIKNREQKQEVISSHGVEDNGKFVKAEPEEYGDDIDDQCGGVFDYGDELHIASMEHQGQGEDEIEMDSEGIWKGFVLSEEEMCDLVEHFI</sequence>
<proteinExistence type="evidence at transcript level"/>
<protein>
    <recommendedName>
        <fullName>Heat stress transcription factor A-6a</fullName>
        <shortName>AtHsfA6a</shortName>
    </recommendedName>
    <alternativeName>
        <fullName>AtHsf-19</fullName>
    </alternativeName>
</protein>
<accession>Q1PDN3</accession>
<accession>A0MFL9</accession>
<accession>Q9FG80</accession>
<gene>
    <name type="primary">HSFA6A</name>
    <name type="synonym">HSF19</name>
    <name type="ordered locus">At5g43840</name>
    <name type="ORF">MQD19.20</name>
</gene>
<name>HFA6A_ARATH</name>
<evidence type="ECO:0000250" key="1"/>
<evidence type="ECO:0000255" key="2"/>
<evidence type="ECO:0000269" key="3">
    <source>
    </source>
</evidence>
<evidence type="ECO:0000305" key="4"/>
<feature type="chain" id="PRO_0000270807" description="Heat stress transcription factor A-6a">
    <location>
        <begin position="1"/>
        <end position="282"/>
    </location>
</feature>
<feature type="DNA-binding region" evidence="1">
    <location>
        <begin position="17"/>
        <end position="111"/>
    </location>
</feature>
<feature type="region of interest" description="Hydrophobic repeat HR-A/B">
    <location>
        <begin position="111"/>
        <end position="177"/>
    </location>
</feature>
<feature type="short sequence motif" description="Bipartite nuclear localization signal" evidence="2">
    <location>
        <begin position="175"/>
        <end position="190"/>
    </location>
</feature>
<feature type="short sequence motif" description="AHA">
    <location>
        <begin position="261"/>
        <end position="270"/>
    </location>
</feature>
<organism>
    <name type="scientific">Arabidopsis thaliana</name>
    <name type="common">Mouse-ear cress</name>
    <dbReference type="NCBI Taxonomy" id="3702"/>
    <lineage>
        <taxon>Eukaryota</taxon>
        <taxon>Viridiplantae</taxon>
        <taxon>Streptophyta</taxon>
        <taxon>Embryophyta</taxon>
        <taxon>Tracheophyta</taxon>
        <taxon>Spermatophyta</taxon>
        <taxon>Magnoliopsida</taxon>
        <taxon>eudicotyledons</taxon>
        <taxon>Gunneridae</taxon>
        <taxon>Pentapetalae</taxon>
        <taxon>rosids</taxon>
        <taxon>malvids</taxon>
        <taxon>Brassicales</taxon>
        <taxon>Brassicaceae</taxon>
        <taxon>Camelineae</taxon>
        <taxon>Arabidopsis</taxon>
    </lineage>
</organism>
<dbReference type="EMBL" id="AB026651">
    <property type="protein sequence ID" value="BAB11313.1"/>
    <property type="status" value="ALT_SEQ"/>
    <property type="molecule type" value="Genomic_DNA"/>
</dbReference>
<dbReference type="EMBL" id="CP002688">
    <property type="protein sequence ID" value="AED95016.1"/>
    <property type="molecule type" value="Genomic_DNA"/>
</dbReference>
<dbReference type="EMBL" id="DQ447035">
    <property type="protein sequence ID" value="ABE66218.1"/>
    <property type="molecule type" value="mRNA"/>
</dbReference>
<dbReference type="EMBL" id="DQ653345">
    <property type="protein sequence ID" value="ABK28741.1"/>
    <property type="status" value="ALT_SEQ"/>
    <property type="molecule type" value="mRNA"/>
</dbReference>
<dbReference type="RefSeq" id="NP_199197.1">
    <property type="nucleotide sequence ID" value="NM_123751.2"/>
</dbReference>
<dbReference type="SMR" id="Q1PDN3"/>
<dbReference type="BioGRID" id="19656">
    <property type="interactions" value="7"/>
</dbReference>
<dbReference type="FunCoup" id="Q1PDN3">
    <property type="interactions" value="717"/>
</dbReference>
<dbReference type="IntAct" id="Q1PDN3">
    <property type="interactions" value="5"/>
</dbReference>
<dbReference type="STRING" id="3702.Q1PDN3"/>
<dbReference type="iPTMnet" id="Q1PDN3"/>
<dbReference type="PaxDb" id="3702-AT5G43840.1"/>
<dbReference type="EnsemblPlants" id="AT5G43840.1">
    <property type="protein sequence ID" value="AT5G43840.1"/>
    <property type="gene ID" value="AT5G43840"/>
</dbReference>
<dbReference type="GeneID" id="834406"/>
<dbReference type="Gramene" id="AT5G43840.1">
    <property type="protein sequence ID" value="AT5G43840.1"/>
    <property type="gene ID" value="AT5G43840"/>
</dbReference>
<dbReference type="KEGG" id="ath:AT5G43840"/>
<dbReference type="Araport" id="AT5G43840"/>
<dbReference type="TAIR" id="AT5G43840">
    <property type="gene designation" value="HSFA6A"/>
</dbReference>
<dbReference type="eggNOG" id="KOG0627">
    <property type="taxonomic scope" value="Eukaryota"/>
</dbReference>
<dbReference type="HOGENOM" id="CLU_030308_1_2_1"/>
<dbReference type="InParanoid" id="Q1PDN3"/>
<dbReference type="OMA" id="FIVWEPE"/>
<dbReference type="PhylomeDB" id="Q1PDN3"/>
<dbReference type="PRO" id="PR:Q1PDN3"/>
<dbReference type="Proteomes" id="UP000006548">
    <property type="component" value="Chromosome 5"/>
</dbReference>
<dbReference type="ExpressionAtlas" id="Q1PDN3">
    <property type="expression patterns" value="baseline and differential"/>
</dbReference>
<dbReference type="GO" id="GO:0005634">
    <property type="term" value="C:nucleus"/>
    <property type="evidence" value="ECO:0007669"/>
    <property type="project" value="UniProtKB-SubCell"/>
</dbReference>
<dbReference type="GO" id="GO:0003700">
    <property type="term" value="F:DNA-binding transcription factor activity"/>
    <property type="evidence" value="ECO:0000250"/>
    <property type="project" value="TAIR"/>
</dbReference>
<dbReference type="GO" id="GO:0043565">
    <property type="term" value="F:sequence-specific DNA binding"/>
    <property type="evidence" value="ECO:0007669"/>
    <property type="project" value="InterPro"/>
</dbReference>
<dbReference type="FunFam" id="1.10.10.10:FF:000057">
    <property type="entry name" value="Heat shock transcription factor 1"/>
    <property type="match status" value="1"/>
</dbReference>
<dbReference type="Gene3D" id="1.10.10.10">
    <property type="entry name" value="Winged helix-like DNA-binding domain superfamily/Winged helix DNA-binding domain"/>
    <property type="match status" value="1"/>
</dbReference>
<dbReference type="InterPro" id="IPR000232">
    <property type="entry name" value="HSF_DNA-bd"/>
</dbReference>
<dbReference type="InterPro" id="IPR036388">
    <property type="entry name" value="WH-like_DNA-bd_sf"/>
</dbReference>
<dbReference type="InterPro" id="IPR036390">
    <property type="entry name" value="WH_DNA-bd_sf"/>
</dbReference>
<dbReference type="PANTHER" id="PTHR10015:SF456">
    <property type="entry name" value="E2F_DP FAMILY WINGED-HELIX DNA-BINDING DOMAIN-CONTAINING PROTEIN-RELATED"/>
    <property type="match status" value="1"/>
</dbReference>
<dbReference type="PANTHER" id="PTHR10015">
    <property type="entry name" value="HEAT SHOCK TRANSCRIPTION FACTOR"/>
    <property type="match status" value="1"/>
</dbReference>
<dbReference type="Pfam" id="PF00447">
    <property type="entry name" value="HSF_DNA-bind"/>
    <property type="match status" value="1"/>
</dbReference>
<dbReference type="PRINTS" id="PR00056">
    <property type="entry name" value="HSFDOMAIN"/>
</dbReference>
<dbReference type="SMART" id="SM00415">
    <property type="entry name" value="HSF"/>
    <property type="match status" value="1"/>
</dbReference>
<dbReference type="SUPFAM" id="SSF46785">
    <property type="entry name" value="Winged helix' DNA-binding domain"/>
    <property type="match status" value="1"/>
</dbReference>
<dbReference type="PROSITE" id="PS00434">
    <property type="entry name" value="HSF_DOMAIN"/>
    <property type="match status" value="1"/>
</dbReference>
<keyword id="KW-0010">Activator</keyword>
<keyword id="KW-0238">DNA-binding</keyword>
<keyword id="KW-0539">Nucleus</keyword>
<keyword id="KW-0597">Phosphoprotein</keyword>
<keyword id="KW-1185">Reference proteome</keyword>
<keyword id="KW-0346">Stress response</keyword>
<keyword id="KW-0804">Transcription</keyword>
<keyword id="KW-0805">Transcription regulation</keyword>